<dbReference type="EMBL" id="AE016819">
    <property type="protein sequence ID" value="AAS53479.1"/>
    <property type="molecule type" value="Genomic_DNA"/>
</dbReference>
<dbReference type="RefSeq" id="NP_985655.1">
    <property type="nucleotide sequence ID" value="NM_211009.1"/>
</dbReference>
<dbReference type="SMR" id="Q754G2"/>
<dbReference type="FunCoup" id="Q754G2">
    <property type="interactions" value="39"/>
</dbReference>
<dbReference type="STRING" id="284811.Q754G2"/>
<dbReference type="EnsemblFungi" id="AAS53479">
    <property type="protein sequence ID" value="AAS53479"/>
    <property type="gene ID" value="AGOS_AFR108W"/>
</dbReference>
<dbReference type="GeneID" id="4621898"/>
<dbReference type="KEGG" id="ago:AGOS_AFR108W"/>
<dbReference type="eggNOG" id="ENOG502QTQN">
    <property type="taxonomic scope" value="Eukaryota"/>
</dbReference>
<dbReference type="HOGENOM" id="CLU_006001_1_0_1"/>
<dbReference type="InParanoid" id="Q754G2"/>
<dbReference type="OMA" id="GMSIEIV"/>
<dbReference type="OrthoDB" id="7785529at2759"/>
<dbReference type="Proteomes" id="UP000000591">
    <property type="component" value="Chromosome VI"/>
</dbReference>
<dbReference type="GO" id="GO:0005737">
    <property type="term" value="C:cytoplasm"/>
    <property type="evidence" value="ECO:0000318"/>
    <property type="project" value="GO_Central"/>
</dbReference>
<dbReference type="GO" id="GO:0009898">
    <property type="term" value="C:cytoplasmic side of plasma membrane"/>
    <property type="evidence" value="ECO:0007669"/>
    <property type="project" value="EnsemblFungi"/>
</dbReference>
<dbReference type="GO" id="GO:0005829">
    <property type="term" value="C:cytosol"/>
    <property type="evidence" value="ECO:0000318"/>
    <property type="project" value="GO_Central"/>
</dbReference>
<dbReference type="GO" id="GO:0005886">
    <property type="term" value="C:plasma membrane"/>
    <property type="evidence" value="ECO:0000318"/>
    <property type="project" value="GO_Central"/>
</dbReference>
<dbReference type="GO" id="GO:0030674">
    <property type="term" value="F:protein-macromolecule adaptor activity"/>
    <property type="evidence" value="ECO:0000318"/>
    <property type="project" value="GO_Central"/>
</dbReference>
<dbReference type="GO" id="GO:0031625">
    <property type="term" value="F:ubiquitin protein ligase binding"/>
    <property type="evidence" value="ECO:0000318"/>
    <property type="project" value="GO_Central"/>
</dbReference>
<dbReference type="GO" id="GO:0071230">
    <property type="term" value="P:cellular response to amino acid stimulus"/>
    <property type="evidence" value="ECO:0007669"/>
    <property type="project" value="EnsemblFungi"/>
</dbReference>
<dbReference type="GO" id="GO:0070086">
    <property type="term" value="P:ubiquitin-dependent endocytosis"/>
    <property type="evidence" value="ECO:0000318"/>
    <property type="project" value="GO_Central"/>
</dbReference>
<dbReference type="Gene3D" id="2.60.40.640">
    <property type="match status" value="2"/>
</dbReference>
<dbReference type="InterPro" id="IPR014752">
    <property type="entry name" value="Arrestin-like_C"/>
</dbReference>
<dbReference type="InterPro" id="IPR011021">
    <property type="entry name" value="Arrestin-like_N"/>
</dbReference>
<dbReference type="InterPro" id="IPR011022">
    <property type="entry name" value="Arrestin_C-like"/>
</dbReference>
<dbReference type="InterPro" id="IPR050357">
    <property type="entry name" value="Arrestin_domain-protein"/>
</dbReference>
<dbReference type="InterPro" id="IPR014756">
    <property type="entry name" value="Ig_E-set"/>
</dbReference>
<dbReference type="PANTHER" id="PTHR11188">
    <property type="entry name" value="ARRESTIN DOMAIN CONTAINING PROTEIN"/>
    <property type="match status" value="1"/>
</dbReference>
<dbReference type="PANTHER" id="PTHR11188:SF161">
    <property type="entry name" value="PH-RESPONSE REGULATOR PROTEIN PALF_RIM8"/>
    <property type="match status" value="1"/>
</dbReference>
<dbReference type="Pfam" id="PF02752">
    <property type="entry name" value="Arrestin_C"/>
    <property type="match status" value="1"/>
</dbReference>
<dbReference type="Pfam" id="PF00339">
    <property type="entry name" value="Arrestin_N"/>
    <property type="match status" value="1"/>
</dbReference>
<dbReference type="SMART" id="SM01017">
    <property type="entry name" value="Arrestin_C"/>
    <property type="match status" value="1"/>
</dbReference>
<dbReference type="SUPFAM" id="SSF81296">
    <property type="entry name" value="E set domains"/>
    <property type="match status" value="1"/>
</dbReference>
<sequence>MHMRLFSKFKLHGSSAASEEVFGGKFSYTSAVADFYIELGDAHKIWKPRDVVTGEVVLTLRKPLRGVSLRMSLEGNLRVQTGSGATSRLKFQRTLFSKSSMIYGVEQPEDAEQEGHGLTRGDHRFPFRMRVPSKNIYTSIAFEKGSISYAVGCVLETRSGAQRLSSCSRQISVLVPVDVSLLPKLRPKTVVLQSPQLLRSAKANYPEHDTASSLTKRTTASANSNSSVTTVCSSKTVTISVDLPESGYVIGDTIRIKVHIQHYKEYRNSAGLIATLVRICRVHSTGTDDPMETFRKDICQCVAPLYVEPETHTCSVGMNLNVPLDAFPTLVVPNQGFTFQYYIEVLANLSSKNIVYTESNRVIGGSGMADIPMPGSKLHPVKKISMLPLKLQGPLGKQDTNIDESLIFFQDMVNVDKLKRLRNVTGTSIEVVIGTHRNNSVQQARQSCPGSPVGGSDSTMMSEQSAAGTSLPSSVLDIYDQLANRLSSSVGDQLLRYGMSPDSGPHSANDELPRYTPNVDYMVTEDKRELEQRKLKELESEPSVEEEQ</sequence>
<proteinExistence type="inferred from homology"/>
<comment type="function">
    <text evidence="1">Required for the proteolytic cleavage of the transcription factor RIM101 in response to alkaline ambient pH.</text>
</comment>
<comment type="similarity">
    <text evidence="3">Belongs to the arrestin family. PalF/RIM8 subfamily.</text>
</comment>
<feature type="chain" id="PRO_0000058185" description="pH-response regulator protein palF/RIM8">
    <location>
        <begin position="1"/>
        <end position="548"/>
    </location>
</feature>
<feature type="region of interest" description="Disordered" evidence="2">
    <location>
        <begin position="439"/>
        <end position="470"/>
    </location>
</feature>
<feature type="region of interest" description="Disordered" evidence="2">
    <location>
        <begin position="497"/>
        <end position="516"/>
    </location>
</feature>
<feature type="compositionally biased region" description="Polar residues" evidence="2">
    <location>
        <begin position="439"/>
        <end position="449"/>
    </location>
</feature>
<feature type="compositionally biased region" description="Polar residues" evidence="2">
    <location>
        <begin position="456"/>
        <end position="470"/>
    </location>
</feature>
<gene>
    <name type="primary">RIM8</name>
    <name type="ordered locus">AFR108W</name>
</gene>
<accession>Q754G2</accession>
<name>PALF_EREGS</name>
<keyword id="KW-1185">Reference proteome</keyword>
<protein>
    <recommendedName>
        <fullName>pH-response regulator protein palF/RIM8</fullName>
    </recommendedName>
</protein>
<organism>
    <name type="scientific">Eremothecium gossypii (strain ATCC 10895 / CBS 109.51 / FGSC 9923 / NRRL Y-1056)</name>
    <name type="common">Yeast</name>
    <name type="synonym">Ashbya gossypii</name>
    <dbReference type="NCBI Taxonomy" id="284811"/>
    <lineage>
        <taxon>Eukaryota</taxon>
        <taxon>Fungi</taxon>
        <taxon>Dikarya</taxon>
        <taxon>Ascomycota</taxon>
        <taxon>Saccharomycotina</taxon>
        <taxon>Saccharomycetes</taxon>
        <taxon>Saccharomycetales</taxon>
        <taxon>Saccharomycetaceae</taxon>
        <taxon>Eremothecium</taxon>
    </lineage>
</organism>
<evidence type="ECO:0000250" key="1"/>
<evidence type="ECO:0000256" key="2">
    <source>
        <dbReference type="SAM" id="MobiDB-lite"/>
    </source>
</evidence>
<evidence type="ECO:0000305" key="3"/>
<reference key="1">
    <citation type="journal article" date="2004" name="Science">
        <title>The Ashbya gossypii genome as a tool for mapping the ancient Saccharomyces cerevisiae genome.</title>
        <authorList>
            <person name="Dietrich F.S."/>
            <person name="Voegeli S."/>
            <person name="Brachat S."/>
            <person name="Lerch A."/>
            <person name="Gates K."/>
            <person name="Steiner S."/>
            <person name="Mohr C."/>
            <person name="Poehlmann R."/>
            <person name="Luedi P."/>
            <person name="Choi S."/>
            <person name="Wing R.A."/>
            <person name="Flavier A."/>
            <person name="Gaffney T.D."/>
            <person name="Philippsen P."/>
        </authorList>
    </citation>
    <scope>NUCLEOTIDE SEQUENCE [LARGE SCALE GENOMIC DNA]</scope>
    <source>
        <strain>ATCC 10895 / CBS 109.51 / FGSC 9923 / NRRL Y-1056</strain>
    </source>
</reference>
<reference key="2">
    <citation type="journal article" date="2013" name="G3 (Bethesda)">
        <title>Genomes of Ashbya fungi isolated from insects reveal four mating-type loci, numerous translocations, lack of transposons, and distinct gene duplications.</title>
        <authorList>
            <person name="Dietrich F.S."/>
            <person name="Voegeli S."/>
            <person name="Kuo S."/>
            <person name="Philippsen P."/>
        </authorList>
    </citation>
    <scope>GENOME REANNOTATION</scope>
    <source>
        <strain>ATCC 10895 / CBS 109.51 / FGSC 9923 / NRRL Y-1056</strain>
    </source>
</reference>